<name>RS23A_YEAST</name>
<dbReference type="EMBL" id="M96570">
    <property type="protein sequence ID" value="AAA16235.1"/>
    <property type="molecule type" value="Unassigned_RNA"/>
</dbReference>
<dbReference type="EMBL" id="Z72903">
    <property type="protein sequence ID" value="CAA97128.1"/>
    <property type="molecule type" value="Genomic_DNA"/>
</dbReference>
<dbReference type="EMBL" id="BK006941">
    <property type="protein sequence ID" value="DAA08210.1"/>
    <property type="molecule type" value="Genomic_DNA"/>
</dbReference>
<dbReference type="PIR" id="A46703">
    <property type="entry name" value="A46703"/>
</dbReference>
<dbReference type="RefSeq" id="NP_011633.3">
    <property type="nucleotide sequence ID" value="NM_001181247.3"/>
</dbReference>
<dbReference type="PDB" id="3J6X">
    <property type="method" value="EM"/>
    <property type="resolution" value="6.10 A"/>
    <property type="chains" value="23=1-145"/>
</dbReference>
<dbReference type="PDB" id="3J6Y">
    <property type="method" value="EM"/>
    <property type="resolution" value="6.10 A"/>
    <property type="chains" value="23=1-145"/>
</dbReference>
<dbReference type="PDB" id="3J77">
    <property type="method" value="EM"/>
    <property type="resolution" value="6.20 A"/>
    <property type="chains" value="23=1-145"/>
</dbReference>
<dbReference type="PDB" id="3J78">
    <property type="method" value="EM"/>
    <property type="resolution" value="6.30 A"/>
    <property type="chains" value="23=1-145"/>
</dbReference>
<dbReference type="PDB" id="4U3M">
    <property type="method" value="X-ray"/>
    <property type="resolution" value="3.00 A"/>
    <property type="chains" value="D3/d3=2-145"/>
</dbReference>
<dbReference type="PDB" id="4U3N">
    <property type="method" value="X-ray"/>
    <property type="resolution" value="3.20 A"/>
    <property type="chains" value="D3/d3=2-145"/>
</dbReference>
<dbReference type="PDB" id="4U3U">
    <property type="method" value="X-ray"/>
    <property type="resolution" value="2.90 A"/>
    <property type="chains" value="D3/d3=2-145"/>
</dbReference>
<dbReference type="PDB" id="4U4N">
    <property type="method" value="X-ray"/>
    <property type="resolution" value="3.10 A"/>
    <property type="chains" value="D3/d3=2-145"/>
</dbReference>
<dbReference type="PDB" id="4U4O">
    <property type="method" value="X-ray"/>
    <property type="resolution" value="3.60 A"/>
    <property type="chains" value="D3/d3=2-145"/>
</dbReference>
<dbReference type="PDB" id="4U4Q">
    <property type="method" value="X-ray"/>
    <property type="resolution" value="3.00 A"/>
    <property type="chains" value="D3/d3=2-145"/>
</dbReference>
<dbReference type="PDB" id="4U4R">
    <property type="method" value="X-ray"/>
    <property type="resolution" value="2.80 A"/>
    <property type="chains" value="D3/d3=2-145"/>
</dbReference>
<dbReference type="PDB" id="4U4U">
    <property type="method" value="X-ray"/>
    <property type="resolution" value="3.00 A"/>
    <property type="chains" value="D3/d3=2-145"/>
</dbReference>
<dbReference type="PDB" id="4U4Y">
    <property type="method" value="X-ray"/>
    <property type="resolution" value="3.20 A"/>
    <property type="chains" value="D3/d3=2-145"/>
</dbReference>
<dbReference type="PDB" id="4U4Z">
    <property type="method" value="X-ray"/>
    <property type="resolution" value="3.10 A"/>
    <property type="chains" value="D3/d3=2-145"/>
</dbReference>
<dbReference type="PDB" id="4U50">
    <property type="method" value="X-ray"/>
    <property type="resolution" value="3.20 A"/>
    <property type="chains" value="D3/d3=2-145"/>
</dbReference>
<dbReference type="PDB" id="4U51">
    <property type="method" value="X-ray"/>
    <property type="resolution" value="3.20 A"/>
    <property type="chains" value="D3/d3=2-145"/>
</dbReference>
<dbReference type="PDB" id="4U52">
    <property type="method" value="X-ray"/>
    <property type="resolution" value="3.00 A"/>
    <property type="chains" value="D3/d3=2-145"/>
</dbReference>
<dbReference type="PDB" id="4U53">
    <property type="method" value="X-ray"/>
    <property type="resolution" value="3.30 A"/>
    <property type="chains" value="D3/d3=2-145"/>
</dbReference>
<dbReference type="PDB" id="4U55">
    <property type="method" value="X-ray"/>
    <property type="resolution" value="3.20 A"/>
    <property type="chains" value="D3/d3=2-145"/>
</dbReference>
<dbReference type="PDB" id="4U56">
    <property type="method" value="X-ray"/>
    <property type="resolution" value="3.45 A"/>
    <property type="chains" value="D3/d3=2-145"/>
</dbReference>
<dbReference type="PDB" id="4U6F">
    <property type="method" value="X-ray"/>
    <property type="resolution" value="3.10 A"/>
    <property type="chains" value="D3/d3=2-145"/>
</dbReference>
<dbReference type="PDB" id="4V4B">
    <property type="method" value="EM"/>
    <property type="resolution" value="11.70 A"/>
    <property type="chains" value="AL=28-145"/>
</dbReference>
<dbReference type="PDB" id="4V5Z">
    <property type="method" value="EM"/>
    <property type="resolution" value="8.70 A"/>
    <property type="chains" value="Al=4-145"/>
</dbReference>
<dbReference type="PDB" id="4V6I">
    <property type="method" value="EM"/>
    <property type="resolution" value="8.80 A"/>
    <property type="chains" value="AL=1-145"/>
</dbReference>
<dbReference type="PDB" id="4V7H">
    <property type="method" value="EM"/>
    <property type="resolution" value="8.90 A"/>
    <property type="chains" value="L=28-145"/>
</dbReference>
<dbReference type="PDB" id="4V7R">
    <property type="method" value="X-ray"/>
    <property type="resolution" value="4.00 A"/>
    <property type="chains" value="AP/CP=1-145"/>
</dbReference>
<dbReference type="PDB" id="4V88">
    <property type="method" value="X-ray"/>
    <property type="resolution" value="3.00 A"/>
    <property type="chains" value="AX/CX=1-145"/>
</dbReference>
<dbReference type="PDB" id="4V8Y">
    <property type="method" value="EM"/>
    <property type="resolution" value="4.30 A"/>
    <property type="chains" value="AX=1-145"/>
</dbReference>
<dbReference type="PDB" id="4V8Z">
    <property type="method" value="EM"/>
    <property type="resolution" value="6.60 A"/>
    <property type="chains" value="AX=1-145"/>
</dbReference>
<dbReference type="PDB" id="4V92">
    <property type="method" value="EM"/>
    <property type="resolution" value="3.70 A"/>
    <property type="chains" value="X=2-143"/>
</dbReference>
<dbReference type="PDB" id="5DAT">
    <property type="method" value="X-ray"/>
    <property type="resolution" value="3.15 A"/>
    <property type="chains" value="D3/d3=2-145"/>
</dbReference>
<dbReference type="PDB" id="5DC3">
    <property type="method" value="X-ray"/>
    <property type="resolution" value="3.25 A"/>
    <property type="chains" value="D3/d3=2-145"/>
</dbReference>
<dbReference type="PDB" id="5DGE">
    <property type="method" value="X-ray"/>
    <property type="resolution" value="3.45 A"/>
    <property type="chains" value="D3/d3=2-145"/>
</dbReference>
<dbReference type="PDB" id="5DGF">
    <property type="method" value="X-ray"/>
    <property type="resolution" value="3.30 A"/>
    <property type="chains" value="D3/d3=2-145"/>
</dbReference>
<dbReference type="PDB" id="5DGV">
    <property type="method" value="X-ray"/>
    <property type="resolution" value="3.10 A"/>
    <property type="chains" value="D3/d3=2-145"/>
</dbReference>
<dbReference type="PDB" id="5FCI">
    <property type="method" value="X-ray"/>
    <property type="resolution" value="3.40 A"/>
    <property type="chains" value="D3/d3=2-145"/>
</dbReference>
<dbReference type="PDB" id="5FCJ">
    <property type="method" value="X-ray"/>
    <property type="resolution" value="3.10 A"/>
    <property type="chains" value="D3/d3=2-145"/>
</dbReference>
<dbReference type="PDB" id="5I4L">
    <property type="method" value="X-ray"/>
    <property type="resolution" value="3.10 A"/>
    <property type="chains" value="D3/d3=2-145"/>
</dbReference>
<dbReference type="PDB" id="5JUO">
    <property type="method" value="EM"/>
    <property type="resolution" value="4.00 A"/>
    <property type="chains" value="UB=1-145"/>
</dbReference>
<dbReference type="PDB" id="5JUP">
    <property type="method" value="EM"/>
    <property type="resolution" value="3.50 A"/>
    <property type="chains" value="UB=1-145"/>
</dbReference>
<dbReference type="PDB" id="5JUS">
    <property type="method" value="EM"/>
    <property type="resolution" value="4.20 A"/>
    <property type="chains" value="UB=1-145"/>
</dbReference>
<dbReference type="PDB" id="5JUT">
    <property type="method" value="EM"/>
    <property type="resolution" value="4.00 A"/>
    <property type="chains" value="UB=1-145"/>
</dbReference>
<dbReference type="PDB" id="5JUU">
    <property type="method" value="EM"/>
    <property type="resolution" value="4.00 A"/>
    <property type="chains" value="UB=1-145"/>
</dbReference>
<dbReference type="PDB" id="5LL6">
    <property type="method" value="EM"/>
    <property type="resolution" value="3.90 A"/>
    <property type="chains" value="c=1-145"/>
</dbReference>
<dbReference type="PDB" id="5M1J">
    <property type="method" value="EM"/>
    <property type="resolution" value="3.30 A"/>
    <property type="chains" value="X2=2-145"/>
</dbReference>
<dbReference type="PDB" id="5MC6">
    <property type="method" value="EM"/>
    <property type="resolution" value="3.80 A"/>
    <property type="chains" value="c=1-145"/>
</dbReference>
<dbReference type="PDB" id="5MEI">
    <property type="method" value="X-ray"/>
    <property type="resolution" value="3.50 A"/>
    <property type="chains" value="Y/d3=2-145"/>
</dbReference>
<dbReference type="PDB" id="5NDG">
    <property type="method" value="X-ray"/>
    <property type="resolution" value="3.70 A"/>
    <property type="chains" value="D3/d3=2-145"/>
</dbReference>
<dbReference type="PDB" id="5NDV">
    <property type="method" value="X-ray"/>
    <property type="resolution" value="3.30 A"/>
    <property type="chains" value="D3/d3=2-145"/>
</dbReference>
<dbReference type="PDB" id="5NDW">
    <property type="method" value="X-ray"/>
    <property type="resolution" value="3.70 A"/>
    <property type="chains" value="D3/d3=2-145"/>
</dbReference>
<dbReference type="PDB" id="5OBM">
    <property type="method" value="X-ray"/>
    <property type="resolution" value="3.40 A"/>
    <property type="chains" value="D3/d3=2-145"/>
</dbReference>
<dbReference type="PDB" id="5ON6">
    <property type="method" value="X-ray"/>
    <property type="resolution" value="3.10 A"/>
    <property type="chains" value="Y/d3=2-145"/>
</dbReference>
<dbReference type="PDB" id="5TBW">
    <property type="method" value="X-ray"/>
    <property type="resolution" value="3.00 A"/>
    <property type="chains" value="Y/d3=2-145"/>
</dbReference>
<dbReference type="PDB" id="5TGA">
    <property type="method" value="X-ray"/>
    <property type="resolution" value="3.30 A"/>
    <property type="chains" value="D3/d3=2-145"/>
</dbReference>
<dbReference type="PDB" id="5TZS">
    <property type="method" value="EM"/>
    <property type="resolution" value="5.10 A"/>
    <property type="chains" value="r=1-145"/>
</dbReference>
<dbReference type="PDB" id="5WYJ">
    <property type="method" value="EM"/>
    <property type="resolution" value="8.70 A"/>
    <property type="chains" value="SY=1-145"/>
</dbReference>
<dbReference type="PDB" id="5WYK">
    <property type="method" value="EM"/>
    <property type="resolution" value="4.50 A"/>
    <property type="chains" value="SY=1-145"/>
</dbReference>
<dbReference type="PDB" id="6EML">
    <property type="method" value="EM"/>
    <property type="resolution" value="3.60 A"/>
    <property type="chains" value="c=1-145"/>
</dbReference>
<dbReference type="PDB" id="6FAI">
    <property type="method" value="EM"/>
    <property type="resolution" value="3.40 A"/>
    <property type="chains" value="X=1-145"/>
</dbReference>
<dbReference type="PDB" id="6GQ1">
    <property type="method" value="EM"/>
    <property type="resolution" value="4.40 A"/>
    <property type="chains" value="AN=2-145"/>
</dbReference>
<dbReference type="PDB" id="6GQB">
    <property type="method" value="EM"/>
    <property type="resolution" value="3.90 A"/>
    <property type="chains" value="AN=2-145"/>
</dbReference>
<dbReference type="PDB" id="6GQV">
    <property type="method" value="EM"/>
    <property type="resolution" value="4.00 A"/>
    <property type="chains" value="AN=2-145"/>
</dbReference>
<dbReference type="PDB" id="6HHQ">
    <property type="method" value="X-ray"/>
    <property type="resolution" value="3.10 A"/>
    <property type="chains" value="Y/d3=1-145"/>
</dbReference>
<dbReference type="PDB" id="6I7O">
    <property type="method" value="EM"/>
    <property type="resolution" value="5.30 A"/>
    <property type="chains" value="c/cb=2-145"/>
</dbReference>
<dbReference type="PDB" id="6KE6">
    <property type="method" value="EM"/>
    <property type="resolution" value="3.40 A"/>
    <property type="chains" value="SY=1-145"/>
</dbReference>
<dbReference type="PDB" id="6LQP">
    <property type="method" value="EM"/>
    <property type="resolution" value="3.20 A"/>
    <property type="chains" value="SY=1-145"/>
</dbReference>
<dbReference type="PDB" id="6LQQ">
    <property type="method" value="EM"/>
    <property type="resolution" value="4.10 A"/>
    <property type="chains" value="SY=1-145"/>
</dbReference>
<dbReference type="PDB" id="6LQR">
    <property type="method" value="EM"/>
    <property type="resolution" value="8.60 A"/>
    <property type="chains" value="SY=1-145"/>
</dbReference>
<dbReference type="PDB" id="6LQS">
    <property type="method" value="EM"/>
    <property type="resolution" value="3.80 A"/>
    <property type="chains" value="SY=1-145"/>
</dbReference>
<dbReference type="PDB" id="6LQT">
    <property type="method" value="EM"/>
    <property type="resolution" value="4.90 A"/>
    <property type="chains" value="SY=1-145"/>
</dbReference>
<dbReference type="PDB" id="6LQU">
    <property type="method" value="EM"/>
    <property type="resolution" value="3.70 A"/>
    <property type="chains" value="SY=1-145"/>
</dbReference>
<dbReference type="PDB" id="6LQV">
    <property type="method" value="EM"/>
    <property type="resolution" value="4.80 A"/>
    <property type="chains" value="SY=1-145"/>
</dbReference>
<dbReference type="PDB" id="6Q8Y">
    <property type="method" value="EM"/>
    <property type="resolution" value="3.10 A"/>
    <property type="chains" value="c=2-145"/>
</dbReference>
<dbReference type="PDB" id="6RBD">
    <property type="method" value="EM"/>
    <property type="resolution" value="3.47 A"/>
    <property type="chains" value="X=1-145"/>
</dbReference>
<dbReference type="PDB" id="6RBE">
    <property type="method" value="EM"/>
    <property type="resolution" value="3.80 A"/>
    <property type="chains" value="X=1-145"/>
</dbReference>
<dbReference type="PDB" id="6S47">
    <property type="method" value="EM"/>
    <property type="resolution" value="3.28 A"/>
    <property type="chains" value="BY=2-145"/>
</dbReference>
<dbReference type="PDB" id="6SNT">
    <property type="method" value="EM"/>
    <property type="resolution" value="2.80 A"/>
    <property type="chains" value="X=1-145"/>
</dbReference>
<dbReference type="PDB" id="6SV4">
    <property type="method" value="EM"/>
    <property type="resolution" value="3.30 A"/>
    <property type="chains" value="c/cb/cc=1-145"/>
</dbReference>
<dbReference type="PDB" id="6T4Q">
    <property type="method" value="EM"/>
    <property type="resolution" value="2.60 A"/>
    <property type="chains" value="SX=2-145"/>
</dbReference>
<dbReference type="PDB" id="6T7I">
    <property type="method" value="EM"/>
    <property type="resolution" value="3.20 A"/>
    <property type="chains" value="SX=1-145"/>
</dbReference>
<dbReference type="PDB" id="6T7T">
    <property type="method" value="EM"/>
    <property type="resolution" value="3.10 A"/>
    <property type="chains" value="SX=1-145"/>
</dbReference>
<dbReference type="PDB" id="6T83">
    <property type="method" value="EM"/>
    <property type="resolution" value="4.00 A"/>
    <property type="chains" value="Xb/y=1-145"/>
</dbReference>
<dbReference type="PDB" id="6TB3">
    <property type="method" value="EM"/>
    <property type="resolution" value="2.80 A"/>
    <property type="chains" value="c=2-145"/>
</dbReference>
<dbReference type="PDB" id="6TNU">
    <property type="method" value="EM"/>
    <property type="resolution" value="3.10 A"/>
    <property type="chains" value="c=2-145"/>
</dbReference>
<dbReference type="PDB" id="6WDR">
    <property type="method" value="EM"/>
    <property type="resolution" value="3.70 A"/>
    <property type="chains" value="X=2-145"/>
</dbReference>
<dbReference type="PDB" id="6WOO">
    <property type="method" value="EM"/>
    <property type="resolution" value="2.90 A"/>
    <property type="chains" value="XX=1-144"/>
</dbReference>
<dbReference type="PDB" id="6XIQ">
    <property type="method" value="EM"/>
    <property type="resolution" value="4.20 A"/>
    <property type="chains" value="AN=1-145"/>
</dbReference>
<dbReference type="PDB" id="6XIR">
    <property type="method" value="EM"/>
    <property type="resolution" value="3.20 A"/>
    <property type="chains" value="AN=1-145"/>
</dbReference>
<dbReference type="PDB" id="6Y7C">
    <property type="method" value="EM"/>
    <property type="resolution" value="3.80 A"/>
    <property type="chains" value="X=1-145"/>
</dbReference>
<dbReference type="PDB" id="6Z6J">
    <property type="method" value="EM"/>
    <property type="resolution" value="3.40 A"/>
    <property type="chains" value="SX=1-145"/>
</dbReference>
<dbReference type="PDB" id="6Z6K">
    <property type="method" value="EM"/>
    <property type="resolution" value="3.40 A"/>
    <property type="chains" value="SX=1-145"/>
</dbReference>
<dbReference type="PDB" id="6ZCE">
    <property type="method" value="EM"/>
    <property type="resolution" value="5.30 A"/>
    <property type="chains" value="Y=1-145"/>
</dbReference>
<dbReference type="PDB" id="6ZQA">
    <property type="method" value="EM"/>
    <property type="resolution" value="4.40 A"/>
    <property type="chains" value="DX=1-145"/>
</dbReference>
<dbReference type="PDB" id="6ZQB">
    <property type="method" value="EM"/>
    <property type="resolution" value="3.90 A"/>
    <property type="chains" value="DX=1-145"/>
</dbReference>
<dbReference type="PDB" id="6ZQC">
    <property type="method" value="EM"/>
    <property type="resolution" value="3.80 A"/>
    <property type="chains" value="DX=1-145"/>
</dbReference>
<dbReference type="PDB" id="6ZQD">
    <property type="method" value="EM"/>
    <property type="resolution" value="3.80 A"/>
    <property type="chains" value="DX=1-145"/>
</dbReference>
<dbReference type="PDB" id="6ZQE">
    <property type="method" value="EM"/>
    <property type="resolution" value="7.10 A"/>
    <property type="chains" value="DX=1-145"/>
</dbReference>
<dbReference type="PDB" id="6ZQF">
    <property type="method" value="EM"/>
    <property type="resolution" value="4.90 A"/>
    <property type="chains" value="DX=1-145"/>
</dbReference>
<dbReference type="PDB" id="6ZQG">
    <property type="method" value="EM"/>
    <property type="resolution" value="3.50 A"/>
    <property type="chains" value="DX=1-145"/>
</dbReference>
<dbReference type="PDB" id="6ZU9">
    <property type="method" value="EM"/>
    <property type="resolution" value="6.20 A"/>
    <property type="chains" value="c=1-145"/>
</dbReference>
<dbReference type="PDB" id="6ZVI">
    <property type="method" value="EM"/>
    <property type="resolution" value="3.00 A"/>
    <property type="chains" value="H=2-145"/>
</dbReference>
<dbReference type="PDB" id="7A1G">
    <property type="method" value="EM"/>
    <property type="resolution" value="3.00 A"/>
    <property type="chains" value="c=2-145"/>
</dbReference>
<dbReference type="PDB" id="7AJT">
    <property type="method" value="EM"/>
    <property type="resolution" value="4.60 A"/>
    <property type="chains" value="DX=1-145"/>
</dbReference>
<dbReference type="PDB" id="7AJU">
    <property type="method" value="EM"/>
    <property type="resolution" value="3.80 A"/>
    <property type="chains" value="DX=1-145"/>
</dbReference>
<dbReference type="PDB" id="7B7D">
    <property type="method" value="EM"/>
    <property type="resolution" value="3.30 A"/>
    <property type="chains" value="c=2-145"/>
</dbReference>
<dbReference type="PDB" id="7D4I">
    <property type="method" value="EM"/>
    <property type="resolution" value="4.00 A"/>
    <property type="chains" value="SY=1-145"/>
</dbReference>
<dbReference type="PDB" id="7D5S">
    <property type="method" value="EM"/>
    <property type="resolution" value="4.60 A"/>
    <property type="chains" value="SY=1-145"/>
</dbReference>
<dbReference type="PDB" id="7D5T">
    <property type="method" value="EM"/>
    <property type="resolution" value="6.00 A"/>
    <property type="chains" value="SY=1-145"/>
</dbReference>
<dbReference type="PDB" id="7D63">
    <property type="method" value="EM"/>
    <property type="resolution" value="12.30 A"/>
    <property type="chains" value="SY=1-145"/>
</dbReference>
<dbReference type="PDB" id="7MPI">
    <property type="method" value="EM"/>
    <property type="resolution" value="3.05 A"/>
    <property type="chains" value="BX=2-145"/>
</dbReference>
<dbReference type="PDB" id="7MPJ">
    <property type="method" value="EM"/>
    <property type="resolution" value="2.70 A"/>
    <property type="chains" value="BX=2-145"/>
</dbReference>
<dbReference type="PDB" id="7N8B">
    <property type="method" value="EM"/>
    <property type="resolution" value="3.05 A"/>
    <property type="chains" value="BX=2-145"/>
</dbReference>
<dbReference type="PDB" id="7NRC">
    <property type="method" value="EM"/>
    <property type="resolution" value="3.90 A"/>
    <property type="chains" value="Sc=2-145"/>
</dbReference>
<dbReference type="PDB" id="7NRD">
    <property type="method" value="EM"/>
    <property type="resolution" value="4.36 A"/>
    <property type="chains" value="Sc=2-145"/>
</dbReference>
<dbReference type="PDB" id="7SUK">
    <property type="method" value="EM"/>
    <property type="resolution" value="3.99 A"/>
    <property type="chains" value="SR=41-144"/>
</dbReference>
<dbReference type="PDB" id="7WTL">
    <property type="method" value="EM"/>
    <property type="resolution" value="3.30 A"/>
    <property type="chains" value="SX=1-145"/>
</dbReference>
<dbReference type="PDB" id="7WTM">
    <property type="method" value="EM"/>
    <property type="resolution" value="3.50 A"/>
    <property type="chains" value="SX=1-145"/>
</dbReference>
<dbReference type="PDB" id="7WTN">
    <property type="method" value="EM"/>
    <property type="resolution" value="3.40 A"/>
    <property type="chains" value="SX=1-145"/>
</dbReference>
<dbReference type="PDB" id="7WTO">
    <property type="method" value="EM"/>
    <property type="resolution" value="3.50 A"/>
    <property type="chains" value="SX=1-145"/>
</dbReference>
<dbReference type="PDB" id="7WTP">
    <property type="method" value="EM"/>
    <property type="resolution" value="3.80 A"/>
    <property type="chains" value="SX=1-145"/>
</dbReference>
<dbReference type="PDB" id="7WTQ">
    <property type="method" value="EM"/>
    <property type="resolution" value="3.70 A"/>
    <property type="chains" value="SX=1-145"/>
</dbReference>
<dbReference type="PDB" id="7WTR">
    <property type="method" value="EM"/>
    <property type="resolution" value="3.50 A"/>
    <property type="chains" value="SX=1-145"/>
</dbReference>
<dbReference type="PDB" id="7ZPQ">
    <property type="method" value="EM"/>
    <property type="resolution" value="3.47 A"/>
    <property type="chains" value="AX=2-145"/>
</dbReference>
<dbReference type="PDB" id="7ZRS">
    <property type="method" value="EM"/>
    <property type="resolution" value="4.80 A"/>
    <property type="chains" value="AX=2-145"/>
</dbReference>
<dbReference type="PDB" id="7ZUW">
    <property type="method" value="EM"/>
    <property type="resolution" value="4.30 A"/>
    <property type="chains" value="AX=2-145"/>
</dbReference>
<dbReference type="PDB" id="7ZUX">
    <property type="method" value="EM"/>
    <property type="resolution" value="2.50 A"/>
    <property type="chains" value="DX=2-145"/>
</dbReference>
<dbReference type="PDB" id="7ZW0">
    <property type="method" value="EM"/>
    <property type="resolution" value="2.40 A"/>
    <property type="chains" value="sc=1-145"/>
</dbReference>
<dbReference type="PDB" id="8BN3">
    <property type="method" value="EM"/>
    <property type="resolution" value="2.40 A"/>
    <property type="chains" value="D3=2-145"/>
</dbReference>
<dbReference type="PDB" id="8BQD">
    <property type="method" value="EM"/>
    <property type="resolution" value="3.90 A"/>
    <property type="chains" value="c=2-145"/>
</dbReference>
<dbReference type="PDB" id="8BQX">
    <property type="method" value="EM"/>
    <property type="resolution" value="3.80 A"/>
    <property type="chains" value="c=2-145"/>
</dbReference>
<dbReference type="PDB" id="8C00">
    <property type="method" value="EM"/>
    <property type="resolution" value="2.90 A"/>
    <property type="chains" value="c=1-145"/>
</dbReference>
<dbReference type="PDB" id="8C01">
    <property type="method" value="EM"/>
    <property type="resolution" value="2.70 A"/>
    <property type="chains" value="c=1-145"/>
</dbReference>
<dbReference type="PDB" id="8C83">
    <property type="method" value="EM"/>
    <property type="resolution" value="3.00 A"/>
    <property type="chains" value="c=1-145"/>
</dbReference>
<dbReference type="PDB" id="8CAH">
    <property type="method" value="EM"/>
    <property type="resolution" value="3.00 A"/>
    <property type="chains" value="c=1-145"/>
</dbReference>
<dbReference type="PDB" id="8CAS">
    <property type="method" value="EM"/>
    <property type="resolution" value="3.30 A"/>
    <property type="chains" value="c=1-145"/>
</dbReference>
<dbReference type="PDB" id="8CBJ">
    <property type="method" value="EM"/>
    <property type="resolution" value="3.80 A"/>
    <property type="chains" value="X=1-145"/>
</dbReference>
<dbReference type="PDB" id="8CCS">
    <property type="method" value="EM"/>
    <property type="resolution" value="1.97 A"/>
    <property type="chains" value="z=1-145"/>
</dbReference>
<dbReference type="PDB" id="8CDL">
    <property type="method" value="EM"/>
    <property type="resolution" value="2.72 A"/>
    <property type="chains" value="z=1-145"/>
</dbReference>
<dbReference type="PDB" id="8CDR">
    <property type="method" value="EM"/>
    <property type="resolution" value="2.04 A"/>
    <property type="chains" value="z=1-145"/>
</dbReference>
<dbReference type="PDB" id="8CEH">
    <property type="method" value="EM"/>
    <property type="resolution" value="2.05 A"/>
    <property type="chains" value="z=1-145"/>
</dbReference>
<dbReference type="PDB" id="8CF5">
    <property type="method" value="EM"/>
    <property type="resolution" value="2.71 A"/>
    <property type="chains" value="z=1-145"/>
</dbReference>
<dbReference type="PDB" id="8CG8">
    <property type="method" value="EM"/>
    <property type="resolution" value="2.57 A"/>
    <property type="chains" value="z=1-145"/>
</dbReference>
<dbReference type="PDB" id="8CGN">
    <property type="method" value="EM"/>
    <property type="resolution" value="2.28 A"/>
    <property type="chains" value="z=1-145"/>
</dbReference>
<dbReference type="PDB" id="8CIV">
    <property type="method" value="EM"/>
    <property type="resolution" value="2.47 A"/>
    <property type="chains" value="z=1-145"/>
</dbReference>
<dbReference type="PDB" id="8CKU">
    <property type="method" value="EM"/>
    <property type="resolution" value="3.11 A"/>
    <property type="chains" value="z=1-145"/>
</dbReference>
<dbReference type="PDB" id="8CMJ">
    <property type="method" value="EM"/>
    <property type="resolution" value="3.79 A"/>
    <property type="chains" value="z=1-145"/>
</dbReference>
<dbReference type="PDB" id="8EVQ">
    <property type="method" value="EM"/>
    <property type="resolution" value="2.72 A"/>
    <property type="chains" value="BX=1-145"/>
</dbReference>
<dbReference type="PDB" id="8EVR">
    <property type="method" value="EM"/>
    <property type="resolution" value="2.87 A"/>
    <property type="chains" value="BX=1-145"/>
</dbReference>
<dbReference type="PDB" id="8EVS">
    <property type="method" value="EM"/>
    <property type="resolution" value="2.62 A"/>
    <property type="chains" value="BX=1-145"/>
</dbReference>
<dbReference type="PDB" id="8EVT">
    <property type="method" value="EM"/>
    <property type="resolution" value="2.20 A"/>
    <property type="chains" value="BX=1-145"/>
</dbReference>
<dbReference type="PDB" id="8EWB">
    <property type="method" value="EM"/>
    <property type="resolution" value="2.87 A"/>
    <property type="chains" value="BX=1-145"/>
</dbReference>
<dbReference type="PDB" id="8EWC">
    <property type="method" value="EM"/>
    <property type="resolution" value="2.45 A"/>
    <property type="chains" value="BX=1-145"/>
</dbReference>
<dbReference type="PDB" id="8K2D">
    <property type="method" value="EM"/>
    <property type="resolution" value="3.20 A"/>
    <property type="chains" value="SX=1-145"/>
</dbReference>
<dbReference type="PDB" id="8K82">
    <property type="method" value="EM"/>
    <property type="resolution" value="3.00 A"/>
    <property type="chains" value="SX=1-145"/>
</dbReference>
<dbReference type="PDB" id="8P4V">
    <property type="method" value="X-ray"/>
    <property type="resolution" value="3.16 A"/>
    <property type="chains" value="Y/d3=1-145"/>
</dbReference>
<dbReference type="PDB" id="8P9A">
    <property type="method" value="X-ray"/>
    <property type="resolution" value="2.90 A"/>
    <property type="chains" value="Y/d3=1-145"/>
</dbReference>
<dbReference type="PDB" id="8T2X">
    <property type="method" value="EM"/>
    <property type="resolution" value="2.46 A"/>
    <property type="chains" value="BX=1-145"/>
</dbReference>
<dbReference type="PDB" id="8T2Y">
    <property type="method" value="EM"/>
    <property type="resolution" value="2.20 A"/>
    <property type="chains" value="BX=1-145"/>
</dbReference>
<dbReference type="PDB" id="8T2Z">
    <property type="method" value="EM"/>
    <property type="resolution" value="2.40 A"/>
    <property type="chains" value="BX=1-145"/>
</dbReference>
<dbReference type="PDB" id="8T30">
    <property type="method" value="EM"/>
    <property type="resolution" value="2.88 A"/>
    <property type="chains" value="BX=1-145"/>
</dbReference>
<dbReference type="PDB" id="8T3A">
    <property type="method" value="EM"/>
    <property type="resolution" value="2.86 A"/>
    <property type="chains" value="BX=1-145"/>
</dbReference>
<dbReference type="PDB" id="8T3B">
    <property type="method" value="EM"/>
    <property type="resolution" value="3.08 A"/>
    <property type="chains" value="BX=1-145"/>
</dbReference>
<dbReference type="PDB" id="8T3C">
    <property type="method" value="EM"/>
    <property type="resolution" value="3.86 A"/>
    <property type="chains" value="BX=1-145"/>
</dbReference>
<dbReference type="PDB" id="8T3D">
    <property type="method" value="EM"/>
    <property type="resolution" value="2.95 A"/>
    <property type="chains" value="BX=1-145"/>
</dbReference>
<dbReference type="PDB" id="8T3E">
    <property type="method" value="EM"/>
    <property type="resolution" value="3.04 A"/>
    <property type="chains" value="BX=1-145"/>
</dbReference>
<dbReference type="PDB" id="8T3F">
    <property type="method" value="EM"/>
    <property type="resolution" value="3.09 A"/>
    <property type="chains" value="BX=1-145"/>
</dbReference>
<dbReference type="PDB" id="8UT0">
    <property type="method" value="EM"/>
    <property type="resolution" value="3.22 A"/>
    <property type="chains" value="Sc=2-145"/>
</dbReference>
<dbReference type="PDB" id="8UTI">
    <property type="method" value="EM"/>
    <property type="resolution" value="3.13 A"/>
    <property type="chains" value="Sc=2-145"/>
</dbReference>
<dbReference type="PDB" id="8XU8">
    <property type="method" value="EM"/>
    <property type="resolution" value="3.40 A"/>
    <property type="chains" value="Sc=2-145"/>
</dbReference>
<dbReference type="PDB" id="8Y0U">
    <property type="method" value="EM"/>
    <property type="resolution" value="3.59 A"/>
    <property type="chains" value="SX=1-145"/>
</dbReference>
<dbReference type="PDB" id="8YLD">
    <property type="method" value="EM"/>
    <property type="resolution" value="3.90 A"/>
    <property type="chains" value="Sc=2-145"/>
</dbReference>
<dbReference type="PDB" id="8YLR">
    <property type="method" value="EM"/>
    <property type="resolution" value="3.90 A"/>
    <property type="chains" value="Sc=2-145"/>
</dbReference>
<dbReference type="PDB" id="8Z70">
    <property type="method" value="EM"/>
    <property type="resolution" value="3.20 A"/>
    <property type="chains" value="Sc=2-145"/>
</dbReference>
<dbReference type="PDB" id="8Z71">
    <property type="method" value="EM"/>
    <property type="resolution" value="3.60 A"/>
    <property type="chains" value="Sc=2-145"/>
</dbReference>
<dbReference type="PDB" id="9F9S">
    <property type="method" value="EM"/>
    <property type="resolution" value="2.90 A"/>
    <property type="chains" value="Rx/Sx=1-145"/>
</dbReference>
<dbReference type="PDBsum" id="3J6X"/>
<dbReference type="PDBsum" id="3J6Y"/>
<dbReference type="PDBsum" id="3J77"/>
<dbReference type="PDBsum" id="3J78"/>
<dbReference type="PDBsum" id="4U3M"/>
<dbReference type="PDBsum" id="4U3N"/>
<dbReference type="PDBsum" id="4U3U"/>
<dbReference type="PDBsum" id="4U4N"/>
<dbReference type="PDBsum" id="4U4O"/>
<dbReference type="PDBsum" id="4U4Q"/>
<dbReference type="PDBsum" id="4U4R"/>
<dbReference type="PDBsum" id="4U4U"/>
<dbReference type="PDBsum" id="4U4Y"/>
<dbReference type="PDBsum" id="4U4Z"/>
<dbReference type="PDBsum" id="4U50"/>
<dbReference type="PDBsum" id="4U51"/>
<dbReference type="PDBsum" id="4U52"/>
<dbReference type="PDBsum" id="4U53"/>
<dbReference type="PDBsum" id="4U55"/>
<dbReference type="PDBsum" id="4U56"/>
<dbReference type="PDBsum" id="4U6F"/>
<dbReference type="PDBsum" id="4V4B"/>
<dbReference type="PDBsum" id="4V5Z"/>
<dbReference type="PDBsum" id="4V6I"/>
<dbReference type="PDBsum" id="4V7H"/>
<dbReference type="PDBsum" id="4V7R"/>
<dbReference type="PDBsum" id="4V88"/>
<dbReference type="PDBsum" id="4V8Y"/>
<dbReference type="PDBsum" id="4V8Z"/>
<dbReference type="PDBsum" id="4V92"/>
<dbReference type="PDBsum" id="5DAT"/>
<dbReference type="PDBsum" id="5DC3"/>
<dbReference type="PDBsum" id="5DGE"/>
<dbReference type="PDBsum" id="5DGF"/>
<dbReference type="PDBsum" id="5DGV"/>
<dbReference type="PDBsum" id="5FCI"/>
<dbReference type="PDBsum" id="5FCJ"/>
<dbReference type="PDBsum" id="5I4L"/>
<dbReference type="PDBsum" id="5JUO"/>
<dbReference type="PDBsum" id="5JUP"/>
<dbReference type="PDBsum" id="5JUS"/>
<dbReference type="PDBsum" id="5JUT"/>
<dbReference type="PDBsum" id="5JUU"/>
<dbReference type="PDBsum" id="5LL6"/>
<dbReference type="PDBsum" id="5M1J"/>
<dbReference type="PDBsum" id="5MC6"/>
<dbReference type="PDBsum" id="5MEI"/>
<dbReference type="PDBsum" id="5NDG"/>
<dbReference type="PDBsum" id="5NDV"/>
<dbReference type="PDBsum" id="5NDW"/>
<dbReference type="PDBsum" id="5OBM"/>
<dbReference type="PDBsum" id="5ON6"/>
<dbReference type="PDBsum" id="5TBW"/>
<dbReference type="PDBsum" id="5TGA"/>
<dbReference type="PDBsum" id="5TZS"/>
<dbReference type="PDBsum" id="5WYJ"/>
<dbReference type="PDBsum" id="5WYK"/>
<dbReference type="PDBsum" id="6EML"/>
<dbReference type="PDBsum" id="6FAI"/>
<dbReference type="PDBsum" id="6GQ1"/>
<dbReference type="PDBsum" id="6GQB"/>
<dbReference type="PDBsum" id="6GQV"/>
<dbReference type="PDBsum" id="6HHQ"/>
<dbReference type="PDBsum" id="6I7O"/>
<dbReference type="PDBsum" id="6KE6"/>
<dbReference type="PDBsum" id="6LQP"/>
<dbReference type="PDBsum" id="6LQQ"/>
<dbReference type="PDBsum" id="6LQR"/>
<dbReference type="PDBsum" id="6LQS"/>
<dbReference type="PDBsum" id="6LQT"/>
<dbReference type="PDBsum" id="6LQU"/>
<dbReference type="PDBsum" id="6LQV"/>
<dbReference type="PDBsum" id="6Q8Y"/>
<dbReference type="PDBsum" id="6RBD"/>
<dbReference type="PDBsum" id="6RBE"/>
<dbReference type="PDBsum" id="6S47"/>
<dbReference type="PDBsum" id="6SNT"/>
<dbReference type="PDBsum" id="6SV4"/>
<dbReference type="PDBsum" id="6T4Q"/>
<dbReference type="PDBsum" id="6T7I"/>
<dbReference type="PDBsum" id="6T7T"/>
<dbReference type="PDBsum" id="6T83"/>
<dbReference type="PDBsum" id="6TB3"/>
<dbReference type="PDBsum" id="6TNU"/>
<dbReference type="PDBsum" id="6WDR"/>
<dbReference type="PDBsum" id="6WOO"/>
<dbReference type="PDBsum" id="6XIQ"/>
<dbReference type="PDBsum" id="6XIR"/>
<dbReference type="PDBsum" id="6Y7C"/>
<dbReference type="PDBsum" id="6Z6J"/>
<dbReference type="PDBsum" id="6Z6K"/>
<dbReference type="PDBsum" id="6ZCE"/>
<dbReference type="PDBsum" id="6ZQA"/>
<dbReference type="PDBsum" id="6ZQB"/>
<dbReference type="PDBsum" id="6ZQC"/>
<dbReference type="PDBsum" id="6ZQD"/>
<dbReference type="PDBsum" id="6ZQE"/>
<dbReference type="PDBsum" id="6ZQF"/>
<dbReference type="PDBsum" id="6ZQG"/>
<dbReference type="PDBsum" id="6ZU9"/>
<dbReference type="PDBsum" id="6ZVI"/>
<dbReference type="PDBsum" id="7A1G"/>
<dbReference type="PDBsum" id="7AJT"/>
<dbReference type="PDBsum" id="7AJU"/>
<dbReference type="PDBsum" id="7B7D"/>
<dbReference type="PDBsum" id="7D4I"/>
<dbReference type="PDBsum" id="7D5S"/>
<dbReference type="PDBsum" id="7D5T"/>
<dbReference type="PDBsum" id="7D63"/>
<dbReference type="PDBsum" id="7MPI"/>
<dbReference type="PDBsum" id="7MPJ"/>
<dbReference type="PDBsum" id="7N8B"/>
<dbReference type="PDBsum" id="7NRC"/>
<dbReference type="PDBsum" id="7NRD"/>
<dbReference type="PDBsum" id="7SUK"/>
<dbReference type="PDBsum" id="7WTL"/>
<dbReference type="PDBsum" id="7WTM"/>
<dbReference type="PDBsum" id="7WTN"/>
<dbReference type="PDBsum" id="7WTO"/>
<dbReference type="PDBsum" id="7WTP"/>
<dbReference type="PDBsum" id="7WTQ"/>
<dbReference type="PDBsum" id="7WTR"/>
<dbReference type="PDBsum" id="7ZPQ"/>
<dbReference type="PDBsum" id="7ZRS"/>
<dbReference type="PDBsum" id="7ZUW"/>
<dbReference type="PDBsum" id="7ZUX"/>
<dbReference type="PDBsum" id="7ZW0"/>
<dbReference type="PDBsum" id="8BN3"/>
<dbReference type="PDBsum" id="8BQD"/>
<dbReference type="PDBsum" id="8BQX"/>
<dbReference type="PDBsum" id="8C00"/>
<dbReference type="PDBsum" id="8C01"/>
<dbReference type="PDBsum" id="8C83"/>
<dbReference type="PDBsum" id="8CAH"/>
<dbReference type="PDBsum" id="8CAS"/>
<dbReference type="PDBsum" id="8CBJ"/>
<dbReference type="PDBsum" id="8CCS"/>
<dbReference type="PDBsum" id="8CDL"/>
<dbReference type="PDBsum" id="8CDR"/>
<dbReference type="PDBsum" id="8CEH"/>
<dbReference type="PDBsum" id="8CF5"/>
<dbReference type="PDBsum" id="8CG8"/>
<dbReference type="PDBsum" id="8CGN"/>
<dbReference type="PDBsum" id="8CIV"/>
<dbReference type="PDBsum" id="8CKU"/>
<dbReference type="PDBsum" id="8CMJ"/>
<dbReference type="PDBsum" id="8EVQ"/>
<dbReference type="PDBsum" id="8EVR"/>
<dbReference type="PDBsum" id="8EVS"/>
<dbReference type="PDBsum" id="8EVT"/>
<dbReference type="PDBsum" id="8EWB"/>
<dbReference type="PDBsum" id="8EWC"/>
<dbReference type="PDBsum" id="8K2D"/>
<dbReference type="PDBsum" id="8K82"/>
<dbReference type="PDBsum" id="8P4V"/>
<dbReference type="PDBsum" id="8P9A"/>
<dbReference type="PDBsum" id="8T2X"/>
<dbReference type="PDBsum" id="8T2Y"/>
<dbReference type="PDBsum" id="8T2Z"/>
<dbReference type="PDBsum" id="8T30"/>
<dbReference type="PDBsum" id="8T3A"/>
<dbReference type="PDBsum" id="8T3B"/>
<dbReference type="PDBsum" id="8T3C"/>
<dbReference type="PDBsum" id="8T3D"/>
<dbReference type="PDBsum" id="8T3E"/>
<dbReference type="PDBsum" id="8T3F"/>
<dbReference type="PDBsum" id="8UT0"/>
<dbReference type="PDBsum" id="8UTI"/>
<dbReference type="PDBsum" id="8XU8"/>
<dbReference type="PDBsum" id="8Y0U"/>
<dbReference type="PDBsum" id="8YLD"/>
<dbReference type="PDBsum" id="8YLR"/>
<dbReference type="PDBsum" id="8Z70"/>
<dbReference type="PDBsum" id="8Z71"/>
<dbReference type="PDBsum" id="9F9S"/>
<dbReference type="EMDB" id="EMD-0047"/>
<dbReference type="EMDB" id="EMD-0048"/>
<dbReference type="EMDB" id="EMD-0049"/>
<dbReference type="EMDB" id="EMD-0949"/>
<dbReference type="EMDB" id="EMD-0950"/>
<dbReference type="EMDB" id="EMD-0951"/>
<dbReference type="EMDB" id="EMD-0952"/>
<dbReference type="EMDB" id="EMD-0953"/>
<dbReference type="EMDB" id="EMD-0954"/>
<dbReference type="EMDB" id="EMD-0955"/>
<dbReference type="EMDB" id="EMD-10098"/>
<dbReference type="EMDB" id="EMD-10262"/>
<dbReference type="EMDB" id="EMD-10315"/>
<dbReference type="EMDB" id="EMD-10377"/>
<dbReference type="EMDB" id="EMD-10396"/>
<dbReference type="EMDB" id="EMD-10397"/>
<dbReference type="EMDB" id="EMD-10398"/>
<dbReference type="EMDB" id="EMD-10431"/>
<dbReference type="EMDB" id="EMD-10537"/>
<dbReference type="EMDB" id="EMD-10713"/>
<dbReference type="EMDB" id="EMD-11096"/>
<dbReference type="EMDB" id="EMD-11097"/>
<dbReference type="EMDB" id="EMD-11160"/>
<dbReference type="EMDB" id="EMD-11357"/>
<dbReference type="EMDB" id="EMD-11358"/>
<dbReference type="EMDB" id="EMD-11359"/>
<dbReference type="EMDB" id="EMD-11360"/>
<dbReference type="EMDB" id="EMD-11361"/>
<dbReference type="EMDB" id="EMD-11362"/>
<dbReference type="EMDB" id="EMD-11363"/>
<dbReference type="EMDB" id="EMD-11439"/>
<dbReference type="EMDB" id="EMD-11457"/>
<dbReference type="EMDB" id="EMD-11608"/>
<dbReference type="EMDB" id="EMD-11807"/>
<dbReference type="EMDB" id="EMD-11808"/>
<dbReference type="EMDB" id="EMD-12081"/>
<dbReference type="EMDB" id="EMD-12534"/>
<dbReference type="EMDB" id="EMD-12535"/>
<dbReference type="EMDB" id="EMD-14861"/>
<dbReference type="EMDB" id="EMD-14921"/>
<dbReference type="EMDB" id="EMD-14978"/>
<dbReference type="EMDB" id="EMD-14979"/>
<dbReference type="EMDB" id="EMD-14990"/>
<dbReference type="EMDB" id="EMD-16127"/>
<dbReference type="EMDB" id="EMD-16182"/>
<dbReference type="EMDB" id="EMD-16191"/>
<dbReference type="EMDB" id="EMD-16347"/>
<dbReference type="EMDB" id="EMD-16349"/>
<dbReference type="EMDB" id="EMD-16470"/>
<dbReference type="EMDB" id="EMD-16525"/>
<dbReference type="EMDB" id="EMD-16533"/>
<dbReference type="EMDB" id="EMD-16541"/>
<dbReference type="EMDB" id="EMD-16563"/>
<dbReference type="EMDB" id="EMD-16591"/>
<dbReference type="EMDB" id="EMD-16594"/>
<dbReference type="EMDB" id="EMD-16609"/>
<dbReference type="EMDB" id="EMD-16616"/>
<dbReference type="EMDB" id="EMD-16634"/>
<dbReference type="EMDB" id="EMD-16648"/>
<dbReference type="EMDB" id="EMD-16684"/>
<dbReference type="EMDB" id="EMD-16702"/>
<dbReference type="EMDB" id="EMD-16729"/>
<dbReference type="EMDB" id="EMD-21644"/>
<dbReference type="EMDB" id="EMD-21859"/>
<dbReference type="EMDB" id="EMD-22196"/>
<dbReference type="EMDB" id="EMD-22198"/>
<dbReference type="EMDB" id="EMD-23934"/>
<dbReference type="EMDB" id="EMD-23935"/>
<dbReference type="EMDB" id="EMD-24235"/>
<dbReference type="EMDB" id="EMD-25441"/>
<dbReference type="EMDB" id="EMD-28633"/>
<dbReference type="EMDB" id="EMD-28634"/>
<dbReference type="EMDB" id="EMD-28635"/>
<dbReference type="EMDB" id="EMD-28636"/>
<dbReference type="EMDB" id="EMD-28642"/>
<dbReference type="EMDB" id="EMD-28643"/>
<dbReference type="EMDB" id="EMD-30574"/>
<dbReference type="EMDB" id="EMD-30584"/>
<dbReference type="EMDB" id="EMD-30585"/>
<dbReference type="EMDB" id="EMD-30588"/>
<dbReference type="EMDB" id="EMD-32790"/>
<dbReference type="EMDB" id="EMD-32791"/>
<dbReference type="EMDB" id="EMD-32792"/>
<dbReference type="EMDB" id="EMD-32793"/>
<dbReference type="EMDB" id="EMD-32794"/>
<dbReference type="EMDB" id="EMD-32795"/>
<dbReference type="EMDB" id="EMD-32796"/>
<dbReference type="EMDB" id="EMD-3461"/>
<dbReference type="EMDB" id="EMD-36839"/>
<dbReference type="EMDB" id="EMD-36945"/>
<dbReference type="EMDB" id="EMD-38660"/>
<dbReference type="EMDB" id="EMD-40990"/>
<dbReference type="EMDB" id="EMD-40991"/>
<dbReference type="EMDB" id="EMD-40992"/>
<dbReference type="EMDB" id="EMD-40993"/>
<dbReference type="EMDB" id="EMD-40997"/>
<dbReference type="EMDB" id="EMD-40998"/>
<dbReference type="EMDB" id="EMD-40999"/>
<dbReference type="EMDB" id="EMD-41000"/>
<dbReference type="EMDB" id="EMD-41001"/>
<dbReference type="EMDB" id="EMD-41002"/>
<dbReference type="EMDB" id="EMD-4140"/>
<dbReference type="EMDB" id="EMD-4214"/>
<dbReference type="EMDB" id="EMD-42525"/>
<dbReference type="EMDB" id="EMD-42540"/>
<dbReference type="EMDB" id="EMD-4427"/>
<dbReference type="EMDB" id="EMD-4474"/>
<dbReference type="EMDB" id="EMD-4792"/>
<dbReference type="EMDB" id="EMD-4793"/>
<dbReference type="EMDB" id="EMD-50259"/>
<dbReference type="EMDB" id="EMD-6695"/>
<dbReference type="EMDB" id="EMD-6696"/>
<dbReference type="EMDB" id="EMD-8473"/>
<dbReference type="EMDB" id="EMD-9964"/>
<dbReference type="SMR" id="P0CX29"/>
<dbReference type="BioGRID" id="33363">
    <property type="interactions" value="283"/>
</dbReference>
<dbReference type="BioGRID" id="36298">
    <property type="interactions" value="94"/>
</dbReference>
<dbReference type="FunCoup" id="P0CX29">
    <property type="interactions" value="978"/>
</dbReference>
<dbReference type="STRING" id="4932.YGR118W"/>
<dbReference type="iPTMnet" id="P0CX29"/>
<dbReference type="PaxDb" id="4932-YGR118W"/>
<dbReference type="PeptideAtlas" id="P0CX29"/>
<dbReference type="EnsemblFungi" id="YGR118W_mRNA">
    <property type="protein sequence ID" value="YGR118W"/>
    <property type="gene ID" value="YGR118W"/>
</dbReference>
<dbReference type="EnsemblFungi" id="YPR132W_mRNA">
    <property type="protein sequence ID" value="YPR132W"/>
    <property type="gene ID" value="YPR132W"/>
</dbReference>
<dbReference type="GeneID" id="853015"/>
<dbReference type="KEGG" id="sce:YGR118W"/>
<dbReference type="KEGG" id="sce:YPR132W"/>
<dbReference type="AGR" id="SGD:S000003350"/>
<dbReference type="SGD" id="S000003350">
    <property type="gene designation" value="RPS23A"/>
</dbReference>
<dbReference type="VEuPathDB" id="FungiDB:YGR118W"/>
<dbReference type="VEuPathDB" id="FungiDB:YPR132W"/>
<dbReference type="eggNOG" id="KOG1749">
    <property type="taxonomic scope" value="Eukaryota"/>
</dbReference>
<dbReference type="HOGENOM" id="CLU_115574_0_1_1"/>
<dbReference type="InParanoid" id="P0CX29"/>
<dbReference type="OMA" id="KFRWSQR"/>
<dbReference type="OrthoDB" id="1713912at2759"/>
<dbReference type="BioCyc" id="YEAST:G3O-30825-MONOMER"/>
<dbReference type="Reactome" id="R-SCE-156827">
    <property type="pathway name" value="L13a-mediated translational silencing of Ceruloplasmin expression"/>
</dbReference>
<dbReference type="Reactome" id="R-SCE-1799339">
    <property type="pathway name" value="SRP-dependent cotranslational protein targeting to membrane"/>
</dbReference>
<dbReference type="Reactome" id="R-SCE-72649">
    <property type="pathway name" value="Translation initiation complex formation"/>
</dbReference>
<dbReference type="Reactome" id="R-SCE-72689">
    <property type="pathway name" value="Formation of a pool of free 40S subunits"/>
</dbReference>
<dbReference type="Reactome" id="R-SCE-72695">
    <property type="pathway name" value="Formation of the ternary complex, and subsequently, the 43S complex"/>
</dbReference>
<dbReference type="Reactome" id="R-SCE-72702">
    <property type="pathway name" value="Ribosomal scanning and start codon recognition"/>
</dbReference>
<dbReference type="Reactome" id="R-SCE-72706">
    <property type="pathway name" value="GTP hydrolysis and joining of the 60S ribosomal subunit"/>
</dbReference>
<dbReference type="Reactome" id="R-SCE-9629569">
    <property type="pathway name" value="Protein hydroxylation"/>
</dbReference>
<dbReference type="Reactome" id="R-SCE-975956">
    <property type="pathway name" value="Nonsense Mediated Decay (NMD) independent of the Exon Junction Complex (EJC)"/>
</dbReference>
<dbReference type="Reactome" id="R-SCE-975957">
    <property type="pathway name" value="Nonsense Mediated Decay (NMD) enhanced by the Exon Junction Complex (EJC)"/>
</dbReference>
<dbReference type="BioGRID-ORCS" id="853015">
    <property type="hits" value="5 hits in 10 CRISPR screens"/>
</dbReference>
<dbReference type="BioGRID-ORCS" id="856250">
    <property type="hits" value="1 hit in 10 CRISPR screens"/>
</dbReference>
<dbReference type="PRO" id="PR:P0CX29"/>
<dbReference type="Proteomes" id="UP000002311">
    <property type="component" value="Chromosome VII"/>
</dbReference>
<dbReference type="RNAct" id="P0CX29">
    <property type="molecule type" value="protein"/>
</dbReference>
<dbReference type="ExpressionAtlas" id="P0CX29">
    <property type="expression patterns" value="baseline and differential"/>
</dbReference>
<dbReference type="GO" id="GO:0005829">
    <property type="term" value="C:cytosol"/>
    <property type="evidence" value="ECO:0000304"/>
    <property type="project" value="Reactome"/>
</dbReference>
<dbReference type="GO" id="GO:0022627">
    <property type="term" value="C:cytosolic small ribosomal subunit"/>
    <property type="evidence" value="ECO:0000314"/>
    <property type="project" value="SGD"/>
</dbReference>
<dbReference type="GO" id="GO:0005840">
    <property type="term" value="C:ribosome"/>
    <property type="evidence" value="ECO:0000318"/>
    <property type="project" value="GO_Central"/>
</dbReference>
<dbReference type="GO" id="GO:0003735">
    <property type="term" value="F:structural constituent of ribosome"/>
    <property type="evidence" value="ECO:0000314"/>
    <property type="project" value="SGD"/>
</dbReference>
<dbReference type="GO" id="GO:1990145">
    <property type="term" value="P:maintenance of translational fidelity"/>
    <property type="evidence" value="ECO:0000314"/>
    <property type="project" value="UniProtKB"/>
</dbReference>
<dbReference type="GO" id="GO:0000462">
    <property type="term" value="P:maturation of SSU-rRNA from tricistronic rRNA transcript (SSU-rRNA, 5.8S rRNA, LSU-rRNA)"/>
    <property type="evidence" value="ECO:0000316"/>
    <property type="project" value="SGD"/>
</dbReference>
<dbReference type="GO" id="GO:0006450">
    <property type="term" value="P:regulation of translational fidelity"/>
    <property type="evidence" value="ECO:0000315"/>
    <property type="project" value="SGD"/>
</dbReference>
<dbReference type="GO" id="GO:0006412">
    <property type="term" value="P:translation"/>
    <property type="evidence" value="ECO:0000318"/>
    <property type="project" value="GO_Central"/>
</dbReference>
<dbReference type="CDD" id="cd03367">
    <property type="entry name" value="Ribosomal_S23"/>
    <property type="match status" value="1"/>
</dbReference>
<dbReference type="FunFam" id="2.40.50.140:FF:000007">
    <property type="entry name" value="40S ribosomal protein S23"/>
    <property type="match status" value="1"/>
</dbReference>
<dbReference type="Gene3D" id="2.40.50.140">
    <property type="entry name" value="Nucleic acid-binding proteins"/>
    <property type="match status" value="1"/>
</dbReference>
<dbReference type="InterPro" id="IPR012340">
    <property type="entry name" value="NA-bd_OB-fold"/>
</dbReference>
<dbReference type="InterPro" id="IPR006032">
    <property type="entry name" value="Ribosomal_uS12"/>
</dbReference>
<dbReference type="InterPro" id="IPR005680">
    <property type="entry name" value="Ribosomal_uS12_euk/arc"/>
</dbReference>
<dbReference type="NCBIfam" id="NF003254">
    <property type="entry name" value="PRK04211.1"/>
    <property type="match status" value="1"/>
</dbReference>
<dbReference type="NCBIfam" id="TIGR00982">
    <property type="entry name" value="uS12_E_A"/>
    <property type="match status" value="1"/>
</dbReference>
<dbReference type="PANTHER" id="PTHR11652">
    <property type="entry name" value="30S RIBOSOMAL PROTEIN S12 FAMILY MEMBER"/>
    <property type="match status" value="1"/>
</dbReference>
<dbReference type="Pfam" id="PF00164">
    <property type="entry name" value="Ribosom_S12_S23"/>
    <property type="match status" value="1"/>
</dbReference>
<dbReference type="PIRSF" id="PIRSF002133">
    <property type="entry name" value="Ribosomal_S12/S23"/>
    <property type="match status" value="1"/>
</dbReference>
<dbReference type="SUPFAM" id="SSF50249">
    <property type="entry name" value="Nucleic acid-binding proteins"/>
    <property type="match status" value="1"/>
</dbReference>
<dbReference type="PROSITE" id="PS00055">
    <property type="entry name" value="RIBOSOMAL_S12"/>
    <property type="match status" value="1"/>
</dbReference>
<feature type="chain" id="PRO_0000146482" description="Small ribosomal subunit protein uS12A">
    <location>
        <begin position="1"/>
        <end position="145"/>
    </location>
</feature>
<feature type="modified residue" description="3,4-dihydroxyproline" evidence="4">
    <location>
        <position position="64"/>
    </location>
</feature>
<feature type="cross-link" description="Glycyl lysine isopeptide (Lys-Gly) (interchain with G-Cter in ubiquitin)" evidence="10">
    <location>
        <position position="56"/>
    </location>
</feature>
<feature type="mutagenesis site" description="Lethal mutation." evidence="4">
    <original>P</original>
    <variation>A</variation>
    <location>
        <position position="64"/>
    </location>
</feature>
<feature type="mutagenesis site" description="Lethal mutation." evidence="4">
    <original>N</original>
    <variation>A</variation>
    <location>
        <position position="65"/>
    </location>
</feature>
<feature type="helix" evidence="14">
    <location>
        <begin position="12"/>
        <end position="22"/>
    </location>
</feature>
<feature type="helix" evidence="14">
    <location>
        <begin position="23"/>
        <end position="25"/>
    </location>
</feature>
<feature type="helix" evidence="14">
    <location>
        <begin position="27"/>
        <end position="34"/>
    </location>
</feature>
<feature type="helix" evidence="14">
    <location>
        <begin position="36"/>
        <end position="39"/>
    </location>
</feature>
<feature type="strand" evidence="14">
    <location>
        <begin position="40"/>
        <end position="45"/>
    </location>
</feature>
<feature type="strand" evidence="14">
    <location>
        <begin position="47"/>
        <end position="60"/>
    </location>
</feature>
<feature type="strand" evidence="11">
    <location>
        <begin position="63"/>
        <end position="65"/>
    </location>
</feature>
<feature type="strand" evidence="14">
    <location>
        <begin position="68"/>
        <end position="76"/>
    </location>
</feature>
<feature type="turn" evidence="14">
    <location>
        <begin position="77"/>
        <end position="79"/>
    </location>
</feature>
<feature type="strand" evidence="14">
    <location>
        <begin position="82"/>
        <end position="86"/>
    </location>
</feature>
<feature type="helix" evidence="14">
    <location>
        <begin position="90"/>
        <end position="95"/>
    </location>
</feature>
<feature type="strand" evidence="14">
    <location>
        <begin position="101"/>
        <end position="106"/>
    </location>
</feature>
<feature type="strand" evidence="12">
    <location>
        <begin position="108"/>
        <end position="112"/>
    </location>
</feature>
<feature type="strand" evidence="13">
    <location>
        <begin position="115"/>
        <end position="117"/>
    </location>
</feature>
<feature type="strand" evidence="14">
    <location>
        <begin position="122"/>
        <end position="127"/>
    </location>
</feature>
<feature type="turn" evidence="12">
    <location>
        <begin position="128"/>
        <end position="130"/>
    </location>
</feature>
<feature type="helix" evidence="14">
    <location>
        <begin position="132"/>
        <end position="136"/>
    </location>
</feature>
<organism>
    <name type="scientific">Saccharomyces cerevisiae (strain ATCC 204508 / S288c)</name>
    <name type="common">Baker's yeast</name>
    <dbReference type="NCBI Taxonomy" id="559292"/>
    <lineage>
        <taxon>Eukaryota</taxon>
        <taxon>Fungi</taxon>
        <taxon>Dikarya</taxon>
        <taxon>Ascomycota</taxon>
        <taxon>Saccharomycotina</taxon>
        <taxon>Saccharomycetes</taxon>
        <taxon>Saccharomycetales</taxon>
        <taxon>Saccharomycetaceae</taxon>
        <taxon>Saccharomyces</taxon>
    </lineage>
</organism>
<evidence type="ECO:0000269" key="1">
    <source>
    </source>
</evidence>
<evidence type="ECO:0000269" key="2">
    <source>
    </source>
</evidence>
<evidence type="ECO:0000269" key="3">
    <source>
    </source>
</evidence>
<evidence type="ECO:0000269" key="4">
    <source>
    </source>
</evidence>
<evidence type="ECO:0000303" key="5">
    <source>
    </source>
</evidence>
<evidence type="ECO:0000303" key="6">
    <source>
    </source>
</evidence>
<evidence type="ECO:0000305" key="7"/>
<evidence type="ECO:0000305" key="8">
    <source>
    </source>
</evidence>
<evidence type="ECO:0000305" key="9">
    <source>
    </source>
</evidence>
<evidence type="ECO:0007744" key="10">
    <source>
    </source>
</evidence>
<evidence type="ECO:0007829" key="11">
    <source>
        <dbReference type="PDB" id="6FAI"/>
    </source>
</evidence>
<evidence type="ECO:0007829" key="12">
    <source>
        <dbReference type="PDB" id="6ZVI"/>
    </source>
</evidence>
<evidence type="ECO:0007829" key="13">
    <source>
        <dbReference type="PDB" id="7A1G"/>
    </source>
</evidence>
<evidence type="ECO:0007829" key="14">
    <source>
        <dbReference type="PDB" id="8C01"/>
    </source>
</evidence>
<reference key="1">
    <citation type="journal article" date="1993" name="J. Biol. Chem.">
        <title>A novel cloning strategy reveals the gene for the yeast homologue to Escherichia coli ribosomal protein S12.</title>
        <authorList>
            <person name="Alksne L.E."/>
            <person name="Warner J.R."/>
        </authorList>
    </citation>
    <scope>NUCLEOTIDE SEQUENCE [GENOMIC DNA]</scope>
</reference>
<reference key="2">
    <citation type="journal article" date="1996" name="Yeast">
        <title>The sequence of a 23.4 kb segment on the right arm of chromosome VII from Saccharomyces cerevisiae reveals CLB6, SPT6, RP28A and NUP57 genes, a Ty3 element and 11 new open reading frames.</title>
        <authorList>
            <person name="Hansen M."/>
            <person name="Albers M."/>
            <person name="Backes U."/>
            <person name="Coblenz A."/>
            <person name="Leuther H."/>
            <person name="Neu R."/>
            <person name="Schreer A."/>
            <person name="Schaefer B."/>
            <person name="Zimmermann M."/>
            <person name="Wolf K."/>
        </authorList>
    </citation>
    <scope>NUCLEOTIDE SEQUENCE [GENOMIC DNA]</scope>
</reference>
<reference key="3">
    <citation type="journal article" date="1997" name="Nature">
        <title>The nucleotide sequence of Saccharomyces cerevisiae chromosome VII.</title>
        <authorList>
            <person name="Tettelin H."/>
            <person name="Agostoni-Carbone M.L."/>
            <person name="Albermann K."/>
            <person name="Albers M."/>
            <person name="Arroyo J."/>
            <person name="Backes U."/>
            <person name="Barreiros T."/>
            <person name="Bertani I."/>
            <person name="Bjourson A.J."/>
            <person name="Brueckner M."/>
            <person name="Bruschi C.V."/>
            <person name="Carignani G."/>
            <person name="Castagnoli L."/>
            <person name="Cerdan E."/>
            <person name="Clemente M.L."/>
            <person name="Coblenz A."/>
            <person name="Coglievina M."/>
            <person name="Coissac E."/>
            <person name="Defoor E."/>
            <person name="Del Bino S."/>
            <person name="Delius H."/>
            <person name="Delneri D."/>
            <person name="de Wergifosse P."/>
            <person name="Dujon B."/>
            <person name="Durand P."/>
            <person name="Entian K.-D."/>
            <person name="Eraso P."/>
            <person name="Escribano V."/>
            <person name="Fabiani L."/>
            <person name="Fartmann B."/>
            <person name="Feroli F."/>
            <person name="Feuermann M."/>
            <person name="Frontali L."/>
            <person name="Garcia-Gonzalez M."/>
            <person name="Garcia-Saez M.I."/>
            <person name="Goffeau A."/>
            <person name="Guerreiro P."/>
            <person name="Hani J."/>
            <person name="Hansen M."/>
            <person name="Hebling U."/>
            <person name="Hernandez K."/>
            <person name="Heumann K."/>
            <person name="Hilger F."/>
            <person name="Hofmann B."/>
            <person name="Indge K.J."/>
            <person name="James C.M."/>
            <person name="Klima R."/>
            <person name="Koetter P."/>
            <person name="Kramer B."/>
            <person name="Kramer W."/>
            <person name="Lauquin G."/>
            <person name="Leuther H."/>
            <person name="Louis E.J."/>
            <person name="Maillier E."/>
            <person name="Marconi A."/>
            <person name="Martegani E."/>
            <person name="Mazon M.J."/>
            <person name="Mazzoni C."/>
            <person name="McReynolds A.D.K."/>
            <person name="Melchioretto P."/>
            <person name="Mewes H.-W."/>
            <person name="Minenkova O."/>
            <person name="Mueller-Auer S."/>
            <person name="Nawrocki A."/>
            <person name="Netter P."/>
            <person name="Neu R."/>
            <person name="Nombela C."/>
            <person name="Oliver S.G."/>
            <person name="Panzeri L."/>
            <person name="Paoluzi S."/>
            <person name="Plevani P."/>
            <person name="Portetelle D."/>
            <person name="Portillo F."/>
            <person name="Potier S."/>
            <person name="Purnelle B."/>
            <person name="Rieger M."/>
            <person name="Riles L."/>
            <person name="Rinaldi T."/>
            <person name="Robben J."/>
            <person name="Rodrigues-Pousada C."/>
            <person name="Rodriguez-Belmonte E."/>
            <person name="Rodriguez-Torres A.M."/>
            <person name="Rose M."/>
            <person name="Ruzzi M."/>
            <person name="Saliola M."/>
            <person name="Sanchez-Perez M."/>
            <person name="Schaefer B."/>
            <person name="Schaefer M."/>
            <person name="Scharfe M."/>
            <person name="Schmidheini T."/>
            <person name="Schreer A."/>
            <person name="Skala J."/>
            <person name="Souciet J.-L."/>
            <person name="Steensma H.Y."/>
            <person name="Talla E."/>
            <person name="Thierry A."/>
            <person name="Vandenbol M."/>
            <person name="van der Aart Q.J.M."/>
            <person name="Van Dyck L."/>
            <person name="Vanoni M."/>
            <person name="Verhasselt P."/>
            <person name="Voet M."/>
            <person name="Volckaert G."/>
            <person name="Wambutt R."/>
            <person name="Watson M.D."/>
            <person name="Weber N."/>
            <person name="Wedler E."/>
            <person name="Wedler H."/>
            <person name="Wipfli P."/>
            <person name="Wolf K."/>
            <person name="Wright L.F."/>
            <person name="Zaccaria P."/>
            <person name="Zimmermann M."/>
            <person name="Zollner A."/>
            <person name="Kleine K."/>
        </authorList>
    </citation>
    <scope>NUCLEOTIDE SEQUENCE [LARGE SCALE GENOMIC DNA]</scope>
    <source>
        <strain>ATCC 204508 / S288c</strain>
    </source>
</reference>
<reference key="4">
    <citation type="journal article" date="2014" name="G3 (Bethesda)">
        <title>The reference genome sequence of Saccharomyces cerevisiae: Then and now.</title>
        <authorList>
            <person name="Engel S.R."/>
            <person name="Dietrich F.S."/>
            <person name="Fisk D.G."/>
            <person name="Binkley G."/>
            <person name="Balakrishnan R."/>
            <person name="Costanzo M.C."/>
            <person name="Dwight S.S."/>
            <person name="Hitz B.C."/>
            <person name="Karra K."/>
            <person name="Nash R.S."/>
            <person name="Weng S."/>
            <person name="Wong E.D."/>
            <person name="Lloyd P."/>
            <person name="Skrzypek M.S."/>
            <person name="Miyasato S.R."/>
            <person name="Simison M."/>
            <person name="Cherry J.M."/>
        </authorList>
    </citation>
    <scope>GENOME REANNOTATION</scope>
    <source>
        <strain>ATCC 204508 / S288c</strain>
    </source>
</reference>
<reference key="5">
    <citation type="journal article" date="1998" name="Yeast">
        <title>The list of cytoplasmic ribosomal proteins of Saccharomyces cerevisiae.</title>
        <authorList>
            <person name="Planta R.J."/>
            <person name="Mager W.H."/>
        </authorList>
    </citation>
    <scope>NOMENCLATURE</scope>
    <scope>SUBUNIT</scope>
</reference>
<reference key="6">
    <citation type="journal article" date="2003" name="Nature">
        <title>Global analysis of protein localization in budding yeast.</title>
        <authorList>
            <person name="Huh W.-K."/>
            <person name="Falvo J.V."/>
            <person name="Gerke L.C."/>
            <person name="Carroll A.S."/>
            <person name="Howson R.W."/>
            <person name="Weissman J.S."/>
            <person name="O'Shea E.K."/>
        </authorList>
    </citation>
    <scope>SUBCELLULAR LOCATION [LARGE SCALE ANALYSIS]</scope>
</reference>
<reference key="7">
    <citation type="journal article" date="2003" name="Nature">
        <title>Global analysis of protein expression in yeast.</title>
        <authorList>
            <person name="Ghaemmaghami S."/>
            <person name="Huh W.-K."/>
            <person name="Bower K."/>
            <person name="Howson R.W."/>
            <person name="Belle A."/>
            <person name="Dephoure N."/>
            <person name="O'Shea E.K."/>
            <person name="Weissman J.S."/>
        </authorList>
    </citation>
    <scope>LEVEL OF PROTEIN EXPRESSION [LARGE SCALE ANALYSIS]</scope>
</reference>
<reference key="8">
    <citation type="journal article" date="2012" name="Proteomics">
        <title>Sites of ubiquitin attachment in Saccharomyces cerevisiae.</title>
        <authorList>
            <person name="Starita L.M."/>
            <person name="Lo R.S."/>
            <person name="Eng J.K."/>
            <person name="von Haller P.D."/>
            <person name="Fields S."/>
        </authorList>
    </citation>
    <scope>UBIQUITINATION [LARGE SCALE ANALYSIS] AT LYS-56</scope>
    <scope>IDENTIFICATION BY MASS SPECTROMETRY [LARGE SCALE ANALYSIS]</scope>
</reference>
<reference key="9">
    <citation type="journal article" date="2014" name="Curr. Opin. Struct. Biol.">
        <title>A new system for naming ribosomal proteins.</title>
        <authorList>
            <person name="Ban N."/>
            <person name="Beckmann R."/>
            <person name="Cate J.H.D."/>
            <person name="Dinman J.D."/>
            <person name="Dragon F."/>
            <person name="Ellis S.R."/>
            <person name="Lafontaine D.L.J."/>
            <person name="Lindahl L."/>
            <person name="Liljas A."/>
            <person name="Lipton J.M."/>
            <person name="McAlear M.A."/>
            <person name="Moore P.B."/>
            <person name="Noller H.F."/>
            <person name="Ortega J."/>
            <person name="Panse V.G."/>
            <person name="Ramakrishnan V."/>
            <person name="Spahn C.M.T."/>
            <person name="Steitz T.A."/>
            <person name="Tchorzewski M."/>
            <person name="Tollervey D."/>
            <person name="Warren A.J."/>
            <person name="Williamson J.R."/>
            <person name="Wilson D."/>
            <person name="Yonath A."/>
            <person name="Yusupov M."/>
        </authorList>
    </citation>
    <scope>NOMENCLATURE</scope>
</reference>
<reference key="10">
    <citation type="journal article" date="2014" name="Proc. Natl. Acad. Sci. U.S.A.">
        <title>Hydroxylation of the eukaryotic ribosomal decoding center affects translational accuracy.</title>
        <authorList>
            <person name="Loenarz C."/>
            <person name="Sekirnik R."/>
            <person name="Thalhammer A."/>
            <person name="Ge W."/>
            <person name="Spivakovsky E."/>
            <person name="Mackeen M.M."/>
            <person name="McDonough M.A."/>
            <person name="Cockman M.E."/>
            <person name="Kessler B.M."/>
            <person name="Ratcliffe P.J."/>
            <person name="Wolf A."/>
            <person name="Schofield C.J."/>
        </authorList>
    </citation>
    <scope>HYDROXYLATION AT PRO-64</scope>
    <scope>MUTAGENESIS OF PRO-64 AND ASN-65</scope>
</reference>
<reference key="11">
    <citation type="journal article" date="2001" name="Cell">
        <title>Structure of the 80S ribosome from Saccharomyces cerevisiae -- tRNA-ribosome and subunit-subunit interactions.</title>
        <authorList>
            <person name="Spahn C.M.T."/>
            <person name="Beckmann R."/>
            <person name="Eswar N."/>
            <person name="Penczek P.A."/>
            <person name="Sali A."/>
            <person name="Blobel G."/>
            <person name="Frank J."/>
        </authorList>
    </citation>
    <scope>3D-STRUCTURE MODELING OF 28-145</scope>
    <scope>ELECTRON MICROSCOPY</scope>
</reference>
<reference key="12">
    <citation type="journal article" date="2004" name="EMBO J.">
        <title>Domain movements of elongation factor eEF2 and the eukaryotic 80S ribosome facilitate tRNA translocation.</title>
        <authorList>
            <person name="Spahn C.M.T."/>
            <person name="Gomez-Lorenzo M.G."/>
            <person name="Grassucci R.A."/>
            <person name="Joergensen R."/>
            <person name="Andersen G.R."/>
            <person name="Beckmann R."/>
            <person name="Penczek P.A."/>
            <person name="Ballesta J.P.G."/>
            <person name="Frank J."/>
        </authorList>
    </citation>
    <scope>3D-STRUCTURE MODELING OF 28-145</scope>
    <scope>ELECTRON MICROSCOPY</scope>
</reference>
<reference key="13">
    <citation type="journal article" date="2010" name="Science">
        <title>Crystal structure of the eukaryotic ribosome.</title>
        <authorList>
            <person name="Ben-Shem A."/>
            <person name="Jenner L."/>
            <person name="Yusupova G."/>
            <person name="Yusupov M."/>
        </authorList>
    </citation>
    <scope>X-RAY CRYSTALLOGRAPHY (4.00 ANGSTROMS) OF 80S RIBOSOME</scope>
</reference>
<reference key="14">
    <citation type="journal article" date="2011" name="Science">
        <title>The structure of the eukaryotic ribosome at 3.0 A resolution.</title>
        <authorList>
            <person name="Ben-Shem A."/>
            <person name="Garreau de Loubresse N."/>
            <person name="Melnikov S."/>
            <person name="Jenner L."/>
            <person name="Yusupova G."/>
            <person name="Yusupov M."/>
        </authorList>
    </citation>
    <scope>X-RAY CRYSTALLOGRAPHY (3.00 ANGSTROMS) OF 80S RIBOSOME</scope>
    <scope>SUBUNIT</scope>
    <scope>SUBCELLULAR LOCATION</scope>
</reference>
<keyword id="KW-0002">3D-structure</keyword>
<keyword id="KW-0963">Cytoplasm</keyword>
<keyword id="KW-0379">Hydroxylation</keyword>
<keyword id="KW-1017">Isopeptide bond</keyword>
<keyword id="KW-1185">Reference proteome</keyword>
<keyword id="KW-0687">Ribonucleoprotein</keyword>
<keyword id="KW-0689">Ribosomal protein</keyword>
<keyword id="KW-0832">Ubl conjugation</keyword>
<proteinExistence type="evidence at protein level"/>
<sequence length="145" mass="16038">MGKGKPRGLNSARKLRVHRRNNRWAENNYKKRLLGTAFKSSPFGGSSHAKGIVLEKLGIESKQPNSAIRKCVRVQLIKNGKKVTAFVPNDGCLNFVDENDEVLLAGFGRKGKAKGDIPGVRFKVVKVSGVSLLALWKEKKEKPRS</sequence>
<protein>
    <recommendedName>
        <fullName evidence="5">Small ribosomal subunit protein uS12A</fullName>
    </recommendedName>
    <alternativeName>
        <fullName evidence="6">40S ribosomal protein S23-A</fullName>
    </alternativeName>
    <alternativeName>
        <fullName>RP37</fullName>
    </alternativeName>
    <alternativeName>
        <fullName>S28</fullName>
    </alternativeName>
    <alternativeName>
        <fullName>YS14</fullName>
    </alternativeName>
</protein>
<gene>
    <name evidence="6" type="primary">RPS23A</name>
    <name type="synonym">RPS28A</name>
    <name type="ordered locus">YGR118W</name>
    <name type="ORF">G6178</name>
</gene>
<accession>P0CX29</accession>
<accession>D6VUP9</accession>
<accession>P32827</accession>
<comment type="function">
    <text evidence="8">Component of the ribosome, a large ribonucleoprotein complex responsible for the synthesis of proteins in the cell. The small ribosomal subunit (SSU) binds messenger RNAs (mRNAs) and translates the encoded message by selecting cognate aminoacyl-transfer RNA (tRNA) molecules. The large subunit (LSU) contains the ribosomal catalytic site termed the peptidyl transferase center (PTC), which catalyzes the formation of peptide bonds, thereby polymerizing the amino acids delivered by tRNAs into a polypeptide chain. The nascent polypeptides leave the ribosome through a tunnel in the LSU and interact with protein factors that function in enzymatic processing, targeting, and the membrane insertion of nascent chains at the exit of the ribosomal tunnel.</text>
</comment>
<comment type="subunit">
    <text evidence="3 9">Component of the small ribosomal subunit (SSU). Mature yeast ribosomes consist of a small (40S) and a large (60S) subunit. The 40S small subunit contains 1 molecule of ribosomal RNA (18S rRNA) and 33 different proteins (encoded by 57 genes). The large 60S subunit contains 3 rRNA molecules (25S, 5.8S and 5S rRNA) and 46 different proteins (encoded by 81 genes) (PubMed:22096102, PubMed:9559554).</text>
</comment>
<comment type="subcellular location">
    <subcellularLocation>
        <location evidence="1 3">Cytoplasm</location>
    </subcellularLocation>
</comment>
<comment type="PTM">
    <text evidence="4">Hydroxylation at Pro-64 affects translation termination efficiency. The stereochemistry of the 3,4-dihydroxyproline has not yet been determined.</text>
</comment>
<comment type="miscellaneous">
    <text evidence="2">Present with 10600 molecules/cell in log phase SD medium.</text>
</comment>
<comment type="miscellaneous">
    <text evidence="7">There are 2 genes for uS12 in yeast.</text>
</comment>
<comment type="similarity">
    <text evidence="7">Belongs to the universal ribosomal protein uS12 family.</text>
</comment>